<gene>
    <name evidence="1" type="primary">pepQ</name>
    <name type="ordered locus">SeSA_A4191</name>
</gene>
<keyword id="KW-0224">Dipeptidase</keyword>
<keyword id="KW-0378">Hydrolase</keyword>
<keyword id="KW-0464">Manganese</keyword>
<keyword id="KW-0479">Metal-binding</keyword>
<keyword id="KW-0482">Metalloprotease</keyword>
<keyword id="KW-0645">Protease</keyword>
<protein>
    <recommendedName>
        <fullName evidence="1">Xaa-Pro dipeptidase</fullName>
        <shortName evidence="1">X-Pro dipeptidase</shortName>
        <ecNumber evidence="1">3.4.13.9</ecNumber>
    </recommendedName>
    <alternativeName>
        <fullName evidence="1">Imidodipeptidase</fullName>
    </alternativeName>
    <alternativeName>
        <fullName evidence="1">Proline dipeptidase</fullName>
        <shortName evidence="1">Prolidase</shortName>
    </alternativeName>
</protein>
<evidence type="ECO:0000255" key="1">
    <source>
        <dbReference type="HAMAP-Rule" id="MF_01279"/>
    </source>
</evidence>
<dbReference type="EC" id="3.4.13.9" evidence="1"/>
<dbReference type="EMBL" id="CP001127">
    <property type="protein sequence ID" value="ACF89309.1"/>
    <property type="molecule type" value="Genomic_DNA"/>
</dbReference>
<dbReference type="RefSeq" id="WP_000444529.1">
    <property type="nucleotide sequence ID" value="NC_011094.1"/>
</dbReference>
<dbReference type="SMR" id="B4TNZ2"/>
<dbReference type="MEROPS" id="M24.003"/>
<dbReference type="KEGG" id="sew:SeSA_A4191"/>
<dbReference type="HOGENOM" id="CLU_050675_0_0_6"/>
<dbReference type="Proteomes" id="UP000001865">
    <property type="component" value="Chromosome"/>
</dbReference>
<dbReference type="GO" id="GO:0005829">
    <property type="term" value="C:cytosol"/>
    <property type="evidence" value="ECO:0007669"/>
    <property type="project" value="TreeGrafter"/>
</dbReference>
<dbReference type="GO" id="GO:0004177">
    <property type="term" value="F:aminopeptidase activity"/>
    <property type="evidence" value="ECO:0007669"/>
    <property type="project" value="TreeGrafter"/>
</dbReference>
<dbReference type="GO" id="GO:0046872">
    <property type="term" value="F:metal ion binding"/>
    <property type="evidence" value="ECO:0007669"/>
    <property type="project" value="UniProtKB-KW"/>
</dbReference>
<dbReference type="GO" id="GO:0008235">
    <property type="term" value="F:metalloexopeptidase activity"/>
    <property type="evidence" value="ECO:0007669"/>
    <property type="project" value="UniProtKB-UniRule"/>
</dbReference>
<dbReference type="GO" id="GO:0016795">
    <property type="term" value="F:phosphoric triester hydrolase activity"/>
    <property type="evidence" value="ECO:0007669"/>
    <property type="project" value="InterPro"/>
</dbReference>
<dbReference type="GO" id="GO:0102009">
    <property type="term" value="F:proline dipeptidase activity"/>
    <property type="evidence" value="ECO:0007669"/>
    <property type="project" value="UniProtKB-EC"/>
</dbReference>
<dbReference type="GO" id="GO:0006508">
    <property type="term" value="P:proteolysis"/>
    <property type="evidence" value="ECO:0007669"/>
    <property type="project" value="UniProtKB-KW"/>
</dbReference>
<dbReference type="CDD" id="cd01087">
    <property type="entry name" value="Prolidase"/>
    <property type="match status" value="1"/>
</dbReference>
<dbReference type="FunFam" id="3.40.350.10:FF:000002">
    <property type="entry name" value="Xaa-Pro dipeptidase"/>
    <property type="match status" value="1"/>
</dbReference>
<dbReference type="FunFam" id="3.90.230.10:FF:000006">
    <property type="entry name" value="Xaa-Pro dipeptidase"/>
    <property type="match status" value="1"/>
</dbReference>
<dbReference type="Gene3D" id="3.90.230.10">
    <property type="entry name" value="Creatinase/methionine aminopeptidase superfamily"/>
    <property type="match status" value="1"/>
</dbReference>
<dbReference type="Gene3D" id="3.40.350.10">
    <property type="entry name" value="Creatinase/prolidase N-terminal domain"/>
    <property type="match status" value="1"/>
</dbReference>
<dbReference type="HAMAP" id="MF_01279">
    <property type="entry name" value="X_Pro_dipeptid"/>
    <property type="match status" value="1"/>
</dbReference>
<dbReference type="InterPro" id="IPR029149">
    <property type="entry name" value="Creatin/AminoP/Spt16_N"/>
</dbReference>
<dbReference type="InterPro" id="IPR036005">
    <property type="entry name" value="Creatinase/aminopeptidase-like"/>
</dbReference>
<dbReference type="InterPro" id="IPR048819">
    <property type="entry name" value="PepQ_N"/>
</dbReference>
<dbReference type="InterPro" id="IPR000994">
    <property type="entry name" value="Pept_M24"/>
</dbReference>
<dbReference type="InterPro" id="IPR001131">
    <property type="entry name" value="Peptidase_M24B_aminopep-P_CS"/>
</dbReference>
<dbReference type="InterPro" id="IPR052433">
    <property type="entry name" value="X-Pro_dipept-like"/>
</dbReference>
<dbReference type="InterPro" id="IPR022846">
    <property type="entry name" value="X_Pro_dipept"/>
</dbReference>
<dbReference type="NCBIfam" id="NF010133">
    <property type="entry name" value="PRK13607.1"/>
    <property type="match status" value="1"/>
</dbReference>
<dbReference type="PANTHER" id="PTHR43226">
    <property type="entry name" value="XAA-PRO AMINOPEPTIDASE 3"/>
    <property type="match status" value="1"/>
</dbReference>
<dbReference type="PANTHER" id="PTHR43226:SF8">
    <property type="entry name" value="XAA-PRO DIPEPTIDASE"/>
    <property type="match status" value="1"/>
</dbReference>
<dbReference type="Pfam" id="PF21216">
    <property type="entry name" value="PepQ_N"/>
    <property type="match status" value="1"/>
</dbReference>
<dbReference type="Pfam" id="PF00557">
    <property type="entry name" value="Peptidase_M24"/>
    <property type="match status" value="1"/>
</dbReference>
<dbReference type="SUPFAM" id="SSF55920">
    <property type="entry name" value="Creatinase/aminopeptidase"/>
    <property type="match status" value="1"/>
</dbReference>
<dbReference type="PROSITE" id="PS00491">
    <property type="entry name" value="PROLINE_PEPTIDASE"/>
    <property type="match status" value="1"/>
</dbReference>
<accession>B4TNZ2</accession>
<proteinExistence type="inferred from homology"/>
<organism>
    <name type="scientific">Salmonella schwarzengrund (strain CVM19633)</name>
    <dbReference type="NCBI Taxonomy" id="439843"/>
    <lineage>
        <taxon>Bacteria</taxon>
        <taxon>Pseudomonadati</taxon>
        <taxon>Pseudomonadota</taxon>
        <taxon>Gammaproteobacteria</taxon>
        <taxon>Enterobacterales</taxon>
        <taxon>Enterobacteriaceae</taxon>
        <taxon>Salmonella</taxon>
    </lineage>
</organism>
<comment type="function">
    <text evidence="1">Splits dipeptides with a prolyl residue in the C-terminal position.</text>
</comment>
<comment type="catalytic activity">
    <reaction evidence="1">
        <text>Xaa-L-Pro dipeptide + H2O = an L-alpha-amino acid + L-proline</text>
        <dbReference type="Rhea" id="RHEA:76407"/>
        <dbReference type="ChEBI" id="CHEBI:15377"/>
        <dbReference type="ChEBI" id="CHEBI:59869"/>
        <dbReference type="ChEBI" id="CHEBI:60039"/>
        <dbReference type="ChEBI" id="CHEBI:195196"/>
        <dbReference type="EC" id="3.4.13.9"/>
    </reaction>
</comment>
<comment type="cofactor">
    <cofactor evidence="1">
        <name>Mn(2+)</name>
        <dbReference type="ChEBI" id="CHEBI:29035"/>
    </cofactor>
    <text evidence="1">Binds 2 manganese ions per subunit.</text>
</comment>
<comment type="similarity">
    <text evidence="1">Belongs to the peptidase M24B family. Bacterial-type prolidase subfamily.</text>
</comment>
<feature type="chain" id="PRO_1000140330" description="Xaa-Pro dipeptidase">
    <location>
        <begin position="1"/>
        <end position="443"/>
    </location>
</feature>
<feature type="binding site" evidence="1">
    <location>
        <position position="246"/>
    </location>
    <ligand>
        <name>Mn(2+)</name>
        <dbReference type="ChEBI" id="CHEBI:29035"/>
        <label>2</label>
    </ligand>
</feature>
<feature type="binding site" evidence="1">
    <location>
        <position position="257"/>
    </location>
    <ligand>
        <name>Mn(2+)</name>
        <dbReference type="ChEBI" id="CHEBI:29035"/>
        <label>1</label>
    </ligand>
</feature>
<feature type="binding site" evidence="1">
    <location>
        <position position="257"/>
    </location>
    <ligand>
        <name>Mn(2+)</name>
        <dbReference type="ChEBI" id="CHEBI:29035"/>
        <label>2</label>
    </ligand>
</feature>
<feature type="binding site" evidence="1">
    <location>
        <position position="339"/>
    </location>
    <ligand>
        <name>Mn(2+)</name>
        <dbReference type="ChEBI" id="CHEBI:29035"/>
        <label>1</label>
    </ligand>
</feature>
<feature type="binding site" evidence="1">
    <location>
        <position position="384"/>
    </location>
    <ligand>
        <name>Mn(2+)</name>
        <dbReference type="ChEBI" id="CHEBI:29035"/>
        <label>1</label>
    </ligand>
</feature>
<feature type="binding site" evidence="1">
    <location>
        <position position="423"/>
    </location>
    <ligand>
        <name>Mn(2+)</name>
        <dbReference type="ChEBI" id="CHEBI:29035"/>
        <label>1</label>
    </ligand>
</feature>
<feature type="binding site" evidence="1">
    <location>
        <position position="423"/>
    </location>
    <ligand>
        <name>Mn(2+)</name>
        <dbReference type="ChEBI" id="CHEBI:29035"/>
        <label>2</label>
    </ligand>
</feature>
<name>PEPQ_SALSV</name>
<sequence length="443" mass="50170">MESLAALYKNHIVTLQERTRDVLARFKLDALLIHSGELFNVFLDDHPYPFKVNPQFKAWVPVTQVPNCWLLVDGVNKPKLWFYLPVDYWHNVEPLPTSFWTEEVEVVALPKADGIGSQLPAARGNIGYIGPVPERALQLDIAASNINPKGVIDYLHYYRAYKTDYELACMREAQKMAVSGHRAAEEAFRSGMSEFDINLAYLTATGHRDTDVPYSNIVALNEHAAVLHYTKLDHQAPSEMRSFLLDAGAEYNGYAADLTRTWSAKSDNDYAHLVKDVNDEQLALIATMKAGVSYVDYHIQFHQRIAKLLRKHQIITDMSEEAMVENDLTGPFMPHGIGHPLGLQVHDVAGFMQDDSGTHLAAPSKYPYLRCTRVLQPRMVLTIEPGIYFIESLLAPWREGPFSKHFNWQKIEALKPFGGIRIEDNVVIHENGVENMTRDLKLA</sequence>
<reference key="1">
    <citation type="journal article" date="2011" name="J. Bacteriol.">
        <title>Comparative genomics of 28 Salmonella enterica isolates: evidence for CRISPR-mediated adaptive sublineage evolution.</title>
        <authorList>
            <person name="Fricke W.F."/>
            <person name="Mammel M.K."/>
            <person name="McDermott P.F."/>
            <person name="Tartera C."/>
            <person name="White D.G."/>
            <person name="Leclerc J.E."/>
            <person name="Ravel J."/>
            <person name="Cebula T.A."/>
        </authorList>
    </citation>
    <scope>NUCLEOTIDE SEQUENCE [LARGE SCALE GENOMIC DNA]</scope>
    <source>
        <strain>CVM19633</strain>
    </source>
</reference>